<dbReference type="EMBL" id="L43967">
    <property type="protein sequence ID" value="AAC71590.1"/>
    <property type="molecule type" value="Genomic_DNA"/>
</dbReference>
<dbReference type="RefSeq" id="WP_009885821.1">
    <property type="nucleotide sequence ID" value="NC_000908.2"/>
</dbReference>
<dbReference type="SMR" id="P55750"/>
<dbReference type="STRING" id="243273.MG_522"/>
<dbReference type="GeneID" id="88282546"/>
<dbReference type="KEGG" id="mge:MG_522"/>
<dbReference type="eggNOG" id="COG0268">
    <property type="taxonomic scope" value="Bacteria"/>
</dbReference>
<dbReference type="HOGENOM" id="CLU_160655_3_2_14"/>
<dbReference type="InParanoid" id="P55750"/>
<dbReference type="OrthoDB" id="9808392at2"/>
<dbReference type="BioCyc" id="MGEN243273:G1GJ2-457-MONOMER"/>
<dbReference type="Proteomes" id="UP000000807">
    <property type="component" value="Chromosome"/>
</dbReference>
<dbReference type="GO" id="GO:1990904">
    <property type="term" value="C:ribonucleoprotein complex"/>
    <property type="evidence" value="ECO:0007669"/>
    <property type="project" value="UniProtKB-KW"/>
</dbReference>
<dbReference type="GO" id="GO:0005840">
    <property type="term" value="C:ribosome"/>
    <property type="evidence" value="ECO:0007669"/>
    <property type="project" value="UniProtKB-KW"/>
</dbReference>
<dbReference type="GO" id="GO:0019843">
    <property type="term" value="F:rRNA binding"/>
    <property type="evidence" value="ECO:0007669"/>
    <property type="project" value="UniProtKB-UniRule"/>
</dbReference>
<dbReference type="GO" id="GO:0003735">
    <property type="term" value="F:structural constituent of ribosome"/>
    <property type="evidence" value="ECO:0007669"/>
    <property type="project" value="InterPro"/>
</dbReference>
<dbReference type="GO" id="GO:0006412">
    <property type="term" value="P:translation"/>
    <property type="evidence" value="ECO:0007669"/>
    <property type="project" value="UniProtKB-UniRule"/>
</dbReference>
<dbReference type="Gene3D" id="1.20.58.110">
    <property type="entry name" value="Ribosomal protein S20"/>
    <property type="match status" value="1"/>
</dbReference>
<dbReference type="HAMAP" id="MF_00500">
    <property type="entry name" value="Ribosomal_bS20"/>
    <property type="match status" value="1"/>
</dbReference>
<dbReference type="InterPro" id="IPR002583">
    <property type="entry name" value="Ribosomal_bS20"/>
</dbReference>
<dbReference type="InterPro" id="IPR036510">
    <property type="entry name" value="Ribosomal_bS20_sf"/>
</dbReference>
<dbReference type="NCBIfam" id="TIGR00029">
    <property type="entry name" value="S20"/>
    <property type="match status" value="1"/>
</dbReference>
<dbReference type="Pfam" id="PF01649">
    <property type="entry name" value="Ribosomal_S20p"/>
    <property type="match status" value="1"/>
</dbReference>
<dbReference type="SUPFAM" id="SSF46992">
    <property type="entry name" value="Ribosomal protein S20"/>
    <property type="match status" value="1"/>
</dbReference>
<evidence type="ECO:0000255" key="1">
    <source>
        <dbReference type="HAMAP-Rule" id="MF_00500"/>
    </source>
</evidence>
<evidence type="ECO:0000256" key="2">
    <source>
        <dbReference type="SAM" id="MobiDB-lite"/>
    </source>
</evidence>
<evidence type="ECO:0000305" key="3"/>
<reference key="1">
    <citation type="journal article" date="1995" name="Science">
        <title>The minimal gene complement of Mycoplasma genitalium.</title>
        <authorList>
            <person name="Fraser C.M."/>
            <person name="Gocayne J.D."/>
            <person name="White O."/>
            <person name="Adams M.D."/>
            <person name="Clayton R.A."/>
            <person name="Fleischmann R.D."/>
            <person name="Bult C.J."/>
            <person name="Kerlavage A.R."/>
            <person name="Sutton G.G."/>
            <person name="Kelley J.M."/>
            <person name="Fritchman J.L."/>
            <person name="Weidman J.F."/>
            <person name="Small K.V."/>
            <person name="Sandusky M."/>
            <person name="Fuhrmann J.L."/>
            <person name="Nguyen D.T."/>
            <person name="Utterback T.R."/>
            <person name="Saudek D.M."/>
            <person name="Phillips C.A."/>
            <person name="Merrick J.M."/>
            <person name="Tomb J.-F."/>
            <person name="Dougherty B.A."/>
            <person name="Bott K.F."/>
            <person name="Hu P.-C."/>
            <person name="Lucier T.S."/>
            <person name="Peterson S.N."/>
            <person name="Smith H.O."/>
            <person name="Hutchison C.A. III"/>
            <person name="Venter J.C."/>
        </authorList>
    </citation>
    <scope>NUCLEOTIDE SEQUENCE [LARGE SCALE GENOMIC DNA]</scope>
    <source>
        <strain>ATCC 33530 / DSM 19775 / NCTC 10195 / G37</strain>
    </source>
</reference>
<reference key="2">
    <citation type="journal article" date="1996" name="Science">
        <title>More Haemophilus and Mycoplasma genes.</title>
        <authorList>
            <person name="Robison K."/>
            <person name="Gilbert W."/>
            <person name="Church G.M."/>
        </authorList>
    </citation>
    <scope>IDENTIFICATION</scope>
</reference>
<gene>
    <name evidence="1" type="primary">rpsT</name>
    <name type="ordered locus">MG363.1</name>
</gene>
<name>RS20_MYCGE</name>
<organism>
    <name type="scientific">Mycoplasma genitalium (strain ATCC 33530 / DSM 19775 / NCTC 10195 / G37)</name>
    <name type="common">Mycoplasmoides genitalium</name>
    <dbReference type="NCBI Taxonomy" id="243273"/>
    <lineage>
        <taxon>Bacteria</taxon>
        <taxon>Bacillati</taxon>
        <taxon>Mycoplasmatota</taxon>
        <taxon>Mycoplasmoidales</taxon>
        <taxon>Mycoplasmoidaceae</taxon>
        <taxon>Mycoplasmoides</taxon>
    </lineage>
</organism>
<keyword id="KW-1185">Reference proteome</keyword>
<keyword id="KW-0687">Ribonucleoprotein</keyword>
<keyword id="KW-0689">Ribosomal protein</keyword>
<keyword id="KW-0694">RNA-binding</keyword>
<keyword id="KW-0699">rRNA-binding</keyword>
<comment type="function">
    <text evidence="1">Binds directly to 16S ribosomal RNA.</text>
</comment>
<comment type="similarity">
    <text evidence="1">Belongs to the bacterial ribosomal protein bS20 family.</text>
</comment>
<feature type="chain" id="PRO_0000167990" description="Small ribosomal subunit protein bS20">
    <location>
        <begin position="1"/>
        <end position="88"/>
    </location>
</feature>
<feature type="region of interest" description="Disordered" evidence="2">
    <location>
        <begin position="1"/>
        <end position="25"/>
    </location>
</feature>
<feature type="compositionally biased region" description="Basic and acidic residues" evidence="2">
    <location>
        <begin position="1"/>
        <end position="17"/>
    </location>
</feature>
<sequence>MANIKSNEKRLRQDIKRNLNNKGQKTKLKTNVKKFNKEINLDNLSSVYSQADRLARKGIISLNRAKRLKSKNAVILHKSNTNSTAKKQ</sequence>
<protein>
    <recommendedName>
        <fullName evidence="1">Small ribosomal subunit protein bS20</fullName>
    </recommendedName>
    <alternativeName>
        <fullName evidence="3">30S ribosomal protein S20</fullName>
    </alternativeName>
</protein>
<proteinExistence type="inferred from homology"/>
<accession>P55750</accession>